<evidence type="ECO:0000269" key="1">
    <source>
    </source>
</evidence>
<evidence type="ECO:0000269" key="2">
    <source>
    </source>
</evidence>
<evidence type="ECO:0000269" key="3">
    <source>
    </source>
</evidence>
<evidence type="ECO:0000269" key="4">
    <source>
    </source>
</evidence>
<evidence type="ECO:0000269" key="5">
    <source>
    </source>
</evidence>
<evidence type="ECO:0000269" key="6">
    <source>
    </source>
</evidence>
<evidence type="ECO:0000305" key="7"/>
<evidence type="ECO:0000312" key="8">
    <source>
        <dbReference type="EMBL" id="AAS77053.1"/>
    </source>
</evidence>
<evidence type="ECO:0000312" key="9">
    <source>
        <dbReference type="EMBL" id="AAU05303.1"/>
    </source>
</evidence>
<name>A2_BPT5</name>
<sequence>MTNAKTAKFAWNEENTQKAVSMYQQLINENGLDFANSDGLKEIAKAVGAASPVSVRSKLTSAKAYQKSDKPRKVGGGSSIRKAHYVRVIAKHAIDSGIIKDADDLASLESAKLETLDAVAQLLGVADEVKQAAGE</sequence>
<dbReference type="EMBL" id="AY543070">
    <property type="protein sequence ID" value="AAS77053.1"/>
    <property type="molecule type" value="Genomic_DNA"/>
</dbReference>
<dbReference type="EMBL" id="AY692264">
    <property type="protein sequence ID" value="AAU05159.1"/>
    <property type="molecule type" value="Genomic_DNA"/>
</dbReference>
<dbReference type="EMBL" id="AY692264">
    <property type="protein sequence ID" value="AAU05303.1"/>
    <property type="molecule type" value="Genomic_DNA"/>
</dbReference>
<dbReference type="EMBL" id="AY587007">
    <property type="protein sequence ID" value="AAX11944.1"/>
    <property type="molecule type" value="Genomic_DNA"/>
</dbReference>
<dbReference type="EMBL" id="AY587007">
    <property type="protein sequence ID" value="AAX12095.1"/>
    <property type="molecule type" value="Genomic_DNA"/>
</dbReference>
<dbReference type="PIR" id="JQ1034">
    <property type="entry name" value="WXBPT5"/>
</dbReference>
<dbReference type="RefSeq" id="YP_006834.1">
    <property type="nucleotide sequence ID" value="NC_005859.1"/>
</dbReference>
<dbReference type="GeneID" id="2777660"/>
<dbReference type="KEGG" id="vg:2777660"/>
<dbReference type="Proteomes" id="UP000002107">
    <property type="component" value="Genome"/>
</dbReference>
<dbReference type="Proteomes" id="UP000002141">
    <property type="component" value="Segment"/>
</dbReference>
<dbReference type="Proteomes" id="UP000002503">
    <property type="component" value="Segment"/>
</dbReference>
<dbReference type="GO" id="GO:0003677">
    <property type="term" value="F:DNA binding"/>
    <property type="evidence" value="ECO:0007669"/>
    <property type="project" value="UniProtKB-KW"/>
</dbReference>
<reference key="1">
    <citation type="submission" date="2004-01" db="EMBL/GenBank/DDBJ databases">
        <title>Bacteriophage T5 complete genome.</title>
        <authorList>
            <person name="Ksenzenko V.N."/>
            <person name="Kaliman A.V."/>
            <person name="Krutilina A.I."/>
            <person name="Shlyapnikov M.G."/>
        </authorList>
    </citation>
    <scope>NUCLEOTIDE SEQUENCE [LARGE SCALE GENOMIC DNA]</scope>
</reference>
<reference key="2">
    <citation type="journal article" date="2005" name="Virology">
        <title>Complete genome sequence of bacteriophage T5.</title>
        <authorList>
            <person name="Wang J."/>
            <person name="Jiang Y."/>
            <person name="Vincent M."/>
            <person name="Sun Y."/>
            <person name="Yu H."/>
            <person name="Wang J."/>
            <person name="Bao Q."/>
            <person name="Kong H."/>
            <person name="Hu S."/>
        </authorList>
    </citation>
    <scope>NUCLEOTIDE SEQUENCE [LARGE SCALE GENOMIC DNA]</scope>
    <source>
        <strain>ATCC 11303-B5</strain>
    </source>
</reference>
<reference key="3">
    <citation type="journal article" date="2014" name="J. Virol.">
        <title>Insights into bacteriophage T5 structure from analysis of its morphogenesis genes and protein components.</title>
        <authorList>
            <person name="Zivanovic Y."/>
            <person name="Confalonieri F."/>
            <person name="Ponchon L."/>
            <person name="Lurz R."/>
            <person name="Chami M."/>
            <person name="Flayhan A."/>
            <person name="Renouard M."/>
            <person name="Huet A."/>
            <person name="Decottignies P."/>
            <person name="Davidson A.R."/>
            <person name="Breyton C."/>
            <person name="Boulanger P."/>
        </authorList>
    </citation>
    <scope>NUCLEOTIDE SEQUENCE [LARGE SCALE GENOMIC DNA]</scope>
    <source>
        <strain>St0 deletion mutant</strain>
    </source>
</reference>
<reference key="4">
    <citation type="journal article" date="1982" name="Biochem. Biophys. Res. Commun.">
        <title>Amino terminal sequence of the bacteriophage T5-coded gene A2 protein.</title>
        <authorList>
            <person name="Fox J.W."/>
            <person name="Barish A."/>
            <person name="Snyder C.E. Jr."/>
            <person name="Benzinger R."/>
        </authorList>
    </citation>
    <scope>PROTEIN SEQUENCE OF 2-29</scope>
</reference>
<reference key="5">
    <citation type="journal article" date="1991" name="Biochem. Biophys. Res. Commun.">
        <title>Amino acid sequence of the bacteriophage T5 gene A2 protein.</title>
        <authorList>
            <person name="Snyder C.E. Jr."/>
        </authorList>
    </citation>
    <scope>PROTEIN SEQUENCE OF 2-134</scope>
    <scope>DNA-BINDING</scope>
</reference>
<reference key="6">
    <citation type="journal article" date="1971" name="J. Mol. Biol.">
        <title>Pre-early proteins of bacteriophage T5: structure and function.</title>
        <authorList>
            <person name="Beckman L.D."/>
            <person name="Hoffman M.S."/>
            <person name="McCorquodale D.J."/>
        </authorList>
    </citation>
    <scope>SUBUNIT</scope>
</reference>
<reference key="7">
    <citation type="journal article" date="1977" name="J. Virol.">
        <title>Pre-early polypeptides of bacteriophages T5 and BF23.</title>
        <authorList>
            <person name="McCorquodale D.J."/>
            <person name="Shaw A.R."/>
            <person name="Shaw P.K."/>
            <person name="Chinnadurai G."/>
        </authorList>
    </citation>
    <scope>INDUCTION</scope>
</reference>
<reference key="8">
    <citation type="journal article" date="1981" name="J. Virol.">
        <title>Modification of RNA polymerase from Escherichia coli by pre-early gene products of bacteriophage T5.</title>
        <authorList>
            <person name="McCorquodale D.J."/>
            <person name="Chen C.W."/>
            <person name="Joseph M.K."/>
            <person name="Woychik R."/>
        </authorList>
    </citation>
    <scope>FUNCTION</scope>
</reference>
<gene>
    <name type="primary">A2</name>
    <name type="synonym">A2-3</name>
    <name evidence="8" type="ORF">T5.006</name>
    <name evidence="9" type="ORF">T5p006</name>
</gene>
<gene>
    <name type="primary">A2.2</name>
    <name type="ORF">T5p164</name>
</gene>
<accession>P23541</accession>
<accession>Q6QGT1</accession>
<feature type="initiator methionine" description="Removed" evidence="2 6">
    <location>
        <position position="1"/>
    </location>
</feature>
<feature type="chain" id="PRO_0000165289" description="Protein A2">
    <location>
        <begin position="2"/>
        <end position="135"/>
    </location>
</feature>
<organism>
    <name type="scientific">Escherichia phage T5</name>
    <name type="common">Enterobacteria phage T5</name>
    <dbReference type="NCBI Taxonomy" id="2695836"/>
    <lineage>
        <taxon>Viruses</taxon>
        <taxon>Duplodnaviria</taxon>
        <taxon>Heunggongvirae</taxon>
        <taxon>Uroviricota</taxon>
        <taxon>Caudoviricetes</taxon>
        <taxon>Demerecviridae</taxon>
        <taxon>Markadamsvirinae</taxon>
        <taxon>Tequintavirus</taxon>
        <taxon>Tequintavirus T5</taxon>
    </lineage>
</organism>
<organismHost>
    <name type="scientific">Escherichia coli</name>
    <dbReference type="NCBI Taxonomy" id="562"/>
</organismHost>
<protein>
    <recommendedName>
        <fullName>Protein A2</fullName>
    </recommendedName>
</protein>
<proteinExistence type="evidence at protein level"/>
<keyword id="KW-0903">Direct protein sequencing</keyword>
<keyword id="KW-0238">DNA-binding</keyword>
<keyword id="KW-0244">Early protein</keyword>
<keyword id="KW-1185">Reference proteome</keyword>
<comment type="function">
    <text evidence="5">Involved, together with A1 protein, in the second step transfer (SST) which allows the completion of viral DNA into the host cell.</text>
</comment>
<comment type="subunit">
    <text evidence="4">Interacts with A1 protein; the two proteins form heterooligomers.</text>
</comment>
<comment type="induction">
    <text evidence="3">Expressed pre-early in the viral replicative cycle. Expressed with a few other proteins from the first step transfer (FST) DNA. FST DNA corresponds to the first small portion of the genome that enters into the host cell at the beginning of infection before pausing.</text>
</comment>
<comment type="miscellaneous">
    <text evidence="1">This gene is part of the long terminal repeats present at both ends of the viral genome and is thus duplicated.</text>
</comment>
<comment type="similarity">
    <text evidence="7">Belongs to the T5likevirus A2 protein family.</text>
</comment>